<name>BRIX_METBU</name>
<accession>Q12ZB3</accession>
<protein>
    <recommendedName>
        <fullName evidence="1">Probable Brix domain-containing ribosomal biogenesis protein</fullName>
    </recommendedName>
</protein>
<evidence type="ECO:0000255" key="1">
    <source>
        <dbReference type="HAMAP-Rule" id="MF_00699"/>
    </source>
</evidence>
<organism>
    <name type="scientific">Methanococcoides burtonii (strain DSM 6242 / NBRC 107633 / OCM 468 / ACE-M)</name>
    <dbReference type="NCBI Taxonomy" id="259564"/>
    <lineage>
        <taxon>Archaea</taxon>
        <taxon>Methanobacteriati</taxon>
        <taxon>Methanobacteriota</taxon>
        <taxon>Stenosarchaea group</taxon>
        <taxon>Methanomicrobia</taxon>
        <taxon>Methanosarcinales</taxon>
        <taxon>Methanosarcinaceae</taxon>
        <taxon>Methanococcoides</taxon>
    </lineage>
</organism>
<comment type="function">
    <text evidence="1">Probably involved in the biogenesis of the ribosome.</text>
</comment>
<reference key="1">
    <citation type="journal article" date="2009" name="ISME J.">
        <title>The genome sequence of the psychrophilic archaeon, Methanococcoides burtonii: the role of genome evolution in cold adaptation.</title>
        <authorList>
            <person name="Allen M.A."/>
            <person name="Lauro F.M."/>
            <person name="Williams T.J."/>
            <person name="Burg D."/>
            <person name="Siddiqui K.S."/>
            <person name="De Francisci D."/>
            <person name="Chong K.W."/>
            <person name="Pilak O."/>
            <person name="Chew H.H."/>
            <person name="De Maere M.Z."/>
            <person name="Ting L."/>
            <person name="Katrib M."/>
            <person name="Ng C."/>
            <person name="Sowers K.R."/>
            <person name="Galperin M.Y."/>
            <person name="Anderson I.J."/>
            <person name="Ivanova N."/>
            <person name="Dalin E."/>
            <person name="Martinez M."/>
            <person name="Lapidus A."/>
            <person name="Hauser L."/>
            <person name="Land M."/>
            <person name="Thomas T."/>
            <person name="Cavicchioli R."/>
        </authorList>
    </citation>
    <scope>NUCLEOTIDE SEQUENCE [LARGE SCALE GENOMIC DNA]</scope>
    <source>
        <strain>DSM 6242 / NBRC 107633 / OCM 468 / ACE-M</strain>
    </source>
</reference>
<gene>
    <name type="ordered locus">Mbur_0203</name>
</gene>
<proteinExistence type="inferred from homology"/>
<feature type="chain" id="PRO_0000273992" description="Probable Brix domain-containing ribosomal biogenesis protein">
    <location>
        <begin position="1"/>
        <end position="155"/>
    </location>
</feature>
<feature type="domain" description="Brix" evidence="1">
    <location>
        <begin position="1"/>
        <end position="155"/>
    </location>
</feature>
<keyword id="KW-0690">Ribosome biogenesis</keyword>
<dbReference type="EMBL" id="CP000300">
    <property type="protein sequence ID" value="ABE51213.1"/>
    <property type="molecule type" value="Genomic_DNA"/>
</dbReference>
<dbReference type="RefSeq" id="WP_011498375.1">
    <property type="nucleotide sequence ID" value="NC_007955.1"/>
</dbReference>
<dbReference type="SMR" id="Q12ZB3"/>
<dbReference type="STRING" id="259564.Mbur_0203"/>
<dbReference type="GeneID" id="3997170"/>
<dbReference type="KEGG" id="mbu:Mbur_0203"/>
<dbReference type="HOGENOM" id="CLU_107897_2_0_2"/>
<dbReference type="OrthoDB" id="117530at2157"/>
<dbReference type="Proteomes" id="UP000001979">
    <property type="component" value="Chromosome"/>
</dbReference>
<dbReference type="GO" id="GO:0019843">
    <property type="term" value="F:rRNA binding"/>
    <property type="evidence" value="ECO:0007669"/>
    <property type="project" value="InterPro"/>
</dbReference>
<dbReference type="GO" id="GO:0006364">
    <property type="term" value="P:rRNA processing"/>
    <property type="evidence" value="ECO:0007669"/>
    <property type="project" value="InterPro"/>
</dbReference>
<dbReference type="Gene3D" id="3.40.50.10480">
    <property type="entry name" value="Probable brix-domain ribosomal biogenesis protein"/>
    <property type="match status" value="1"/>
</dbReference>
<dbReference type="HAMAP" id="MF_00699">
    <property type="entry name" value="BriX"/>
    <property type="match status" value="1"/>
</dbReference>
<dbReference type="InterPro" id="IPR007109">
    <property type="entry name" value="Brix"/>
</dbReference>
<dbReference type="InterPro" id="IPR023548">
    <property type="entry name" value="Brix_dom_Rbsml_bgen_prot"/>
</dbReference>
<dbReference type="NCBIfam" id="NF002093">
    <property type="entry name" value="PRK00933.1-3"/>
    <property type="match status" value="1"/>
</dbReference>
<dbReference type="SMART" id="SM00879">
    <property type="entry name" value="Brix"/>
    <property type="match status" value="1"/>
</dbReference>
<dbReference type="SUPFAM" id="SSF52954">
    <property type="entry name" value="Class II aaRS ABD-related"/>
    <property type="match status" value="1"/>
</dbReference>
<dbReference type="PROSITE" id="PS50833">
    <property type="entry name" value="BRIX"/>
    <property type="match status" value="1"/>
</dbReference>
<sequence length="155" mass="17728">MLITSSRKPSANTRTMCKYLASFFNCKYMTRGKMGLIDIVSLCENGLLMVVGDYHGSPGSIMFYDSHGVELLSIHLSVFYPDGYKYTPLKALEPSINGDGELFNLLSYYLDIPEGECYYDSKCLIASDDHLEFVYLDNMLFRLNIKNYRKMVMSE</sequence>